<organism>
    <name type="scientific">Bacillus cereus (strain ATCC 14579 / DSM 31 / CCUG 7414 / JCM 2152 / NBRC 15305 / NCIMB 9373 / NCTC 2599 / NRRL B-3711)</name>
    <dbReference type="NCBI Taxonomy" id="226900"/>
    <lineage>
        <taxon>Bacteria</taxon>
        <taxon>Bacillati</taxon>
        <taxon>Bacillota</taxon>
        <taxon>Bacilli</taxon>
        <taxon>Bacillales</taxon>
        <taxon>Bacillaceae</taxon>
        <taxon>Bacillus</taxon>
        <taxon>Bacillus cereus group</taxon>
    </lineage>
</organism>
<sequence length="188" mass="21644">MEERNEQVVEEVKEAQVEEAVTPENSEETVEEKSEAALLQEKVDELQAKLTETEGRTLRLQADFENYKRRVQMDKQAAEKYRAQSLVSDILPALDNFERAMQVEATDEQTKSLLQGMEMVHRQLLEALTKEGVEVIEAVGKQFDPNEHQAIMQVEDSEFESNAVVEEFQKGYKLKDRVIRPSMVKVNQ</sequence>
<gene>
    <name evidence="1" type="primary">grpE</name>
    <name type="ordered locus">BC_4313</name>
</gene>
<feature type="chain" id="PRO_0000113737" description="Protein GrpE">
    <location>
        <begin position="1"/>
        <end position="188"/>
    </location>
</feature>
<feature type="region of interest" description="Disordered" evidence="2">
    <location>
        <begin position="1"/>
        <end position="31"/>
    </location>
</feature>
<feature type="compositionally biased region" description="Basic and acidic residues" evidence="2">
    <location>
        <begin position="1"/>
        <end position="16"/>
    </location>
</feature>
<comment type="function">
    <text evidence="1">Participates actively in the response to hyperosmotic and heat shock by preventing the aggregation of stress-denatured proteins, in association with DnaK and GrpE. It is the nucleotide exchange factor for DnaK and may function as a thermosensor. Unfolded proteins bind initially to DnaJ; upon interaction with the DnaJ-bound protein, DnaK hydrolyzes its bound ATP, resulting in the formation of a stable complex. GrpE releases ADP from DnaK; ATP binding to DnaK triggers the release of the substrate protein, thus completing the reaction cycle. Several rounds of ATP-dependent interactions between DnaJ, DnaK and GrpE are required for fully efficient folding.</text>
</comment>
<comment type="subunit">
    <text evidence="1">Homodimer.</text>
</comment>
<comment type="subcellular location">
    <subcellularLocation>
        <location evidence="1">Cytoplasm</location>
    </subcellularLocation>
</comment>
<comment type="similarity">
    <text evidence="1">Belongs to the GrpE family.</text>
</comment>
<accession>Q818E8</accession>
<keyword id="KW-0143">Chaperone</keyword>
<keyword id="KW-0963">Cytoplasm</keyword>
<keyword id="KW-1185">Reference proteome</keyword>
<keyword id="KW-0346">Stress response</keyword>
<name>GRPE_BACCR</name>
<evidence type="ECO:0000255" key="1">
    <source>
        <dbReference type="HAMAP-Rule" id="MF_01151"/>
    </source>
</evidence>
<evidence type="ECO:0000256" key="2">
    <source>
        <dbReference type="SAM" id="MobiDB-lite"/>
    </source>
</evidence>
<dbReference type="EMBL" id="AE016877">
    <property type="protein sequence ID" value="AAP11226.1"/>
    <property type="molecule type" value="Genomic_DNA"/>
</dbReference>
<dbReference type="RefSeq" id="NP_834025.1">
    <property type="nucleotide sequence ID" value="NC_004722.1"/>
</dbReference>
<dbReference type="RefSeq" id="WP_000392711.1">
    <property type="nucleotide sequence ID" value="NZ_CP138336.1"/>
</dbReference>
<dbReference type="SMR" id="Q818E8"/>
<dbReference type="STRING" id="226900.BC_4313"/>
<dbReference type="GeneID" id="67468614"/>
<dbReference type="KEGG" id="bce:BC4313"/>
<dbReference type="PATRIC" id="fig|226900.8.peg.4460"/>
<dbReference type="HOGENOM" id="CLU_057217_5_2_9"/>
<dbReference type="OrthoDB" id="9812586at2"/>
<dbReference type="Proteomes" id="UP000001417">
    <property type="component" value="Chromosome"/>
</dbReference>
<dbReference type="GO" id="GO:0005737">
    <property type="term" value="C:cytoplasm"/>
    <property type="evidence" value="ECO:0007669"/>
    <property type="project" value="UniProtKB-SubCell"/>
</dbReference>
<dbReference type="GO" id="GO:0000774">
    <property type="term" value="F:adenyl-nucleotide exchange factor activity"/>
    <property type="evidence" value="ECO:0000318"/>
    <property type="project" value="GO_Central"/>
</dbReference>
<dbReference type="GO" id="GO:0042803">
    <property type="term" value="F:protein homodimerization activity"/>
    <property type="evidence" value="ECO:0007669"/>
    <property type="project" value="InterPro"/>
</dbReference>
<dbReference type="GO" id="GO:0051087">
    <property type="term" value="F:protein-folding chaperone binding"/>
    <property type="evidence" value="ECO:0007669"/>
    <property type="project" value="InterPro"/>
</dbReference>
<dbReference type="GO" id="GO:0051082">
    <property type="term" value="F:unfolded protein binding"/>
    <property type="evidence" value="ECO:0000318"/>
    <property type="project" value="GO_Central"/>
</dbReference>
<dbReference type="GO" id="GO:0006457">
    <property type="term" value="P:protein folding"/>
    <property type="evidence" value="ECO:0007669"/>
    <property type="project" value="InterPro"/>
</dbReference>
<dbReference type="CDD" id="cd00446">
    <property type="entry name" value="GrpE"/>
    <property type="match status" value="1"/>
</dbReference>
<dbReference type="FunFam" id="2.30.22.10:FF:000001">
    <property type="entry name" value="Protein GrpE"/>
    <property type="match status" value="1"/>
</dbReference>
<dbReference type="FunFam" id="3.90.20.20:FF:000002">
    <property type="entry name" value="Protein GrpE"/>
    <property type="match status" value="1"/>
</dbReference>
<dbReference type="Gene3D" id="3.90.20.20">
    <property type="match status" value="1"/>
</dbReference>
<dbReference type="Gene3D" id="2.30.22.10">
    <property type="entry name" value="Head domain of nucleotide exchange factor GrpE"/>
    <property type="match status" value="1"/>
</dbReference>
<dbReference type="HAMAP" id="MF_01151">
    <property type="entry name" value="GrpE"/>
    <property type="match status" value="1"/>
</dbReference>
<dbReference type="InterPro" id="IPR000740">
    <property type="entry name" value="GrpE"/>
</dbReference>
<dbReference type="InterPro" id="IPR013805">
    <property type="entry name" value="GrpE_coiled_coil"/>
</dbReference>
<dbReference type="InterPro" id="IPR009012">
    <property type="entry name" value="GrpE_head"/>
</dbReference>
<dbReference type="NCBIfam" id="NF010738">
    <property type="entry name" value="PRK14140.1"/>
    <property type="match status" value="1"/>
</dbReference>
<dbReference type="PANTHER" id="PTHR21237">
    <property type="entry name" value="GRPE PROTEIN"/>
    <property type="match status" value="1"/>
</dbReference>
<dbReference type="PANTHER" id="PTHR21237:SF23">
    <property type="entry name" value="GRPE PROTEIN HOMOLOG, MITOCHONDRIAL"/>
    <property type="match status" value="1"/>
</dbReference>
<dbReference type="Pfam" id="PF01025">
    <property type="entry name" value="GrpE"/>
    <property type="match status" value="1"/>
</dbReference>
<dbReference type="PRINTS" id="PR00773">
    <property type="entry name" value="GRPEPROTEIN"/>
</dbReference>
<dbReference type="SUPFAM" id="SSF58014">
    <property type="entry name" value="Coiled-coil domain of nucleotide exchange factor GrpE"/>
    <property type="match status" value="1"/>
</dbReference>
<dbReference type="SUPFAM" id="SSF51064">
    <property type="entry name" value="Head domain of nucleotide exchange factor GrpE"/>
    <property type="match status" value="1"/>
</dbReference>
<dbReference type="PROSITE" id="PS01071">
    <property type="entry name" value="GRPE"/>
    <property type="match status" value="1"/>
</dbReference>
<reference key="1">
    <citation type="journal article" date="2003" name="Nature">
        <title>Genome sequence of Bacillus cereus and comparative analysis with Bacillus anthracis.</title>
        <authorList>
            <person name="Ivanova N."/>
            <person name="Sorokin A."/>
            <person name="Anderson I."/>
            <person name="Galleron N."/>
            <person name="Candelon B."/>
            <person name="Kapatral V."/>
            <person name="Bhattacharyya A."/>
            <person name="Reznik G."/>
            <person name="Mikhailova N."/>
            <person name="Lapidus A."/>
            <person name="Chu L."/>
            <person name="Mazur M."/>
            <person name="Goltsman E."/>
            <person name="Larsen N."/>
            <person name="D'Souza M."/>
            <person name="Walunas T."/>
            <person name="Grechkin Y."/>
            <person name="Pusch G."/>
            <person name="Haselkorn R."/>
            <person name="Fonstein M."/>
            <person name="Ehrlich S.D."/>
            <person name="Overbeek R."/>
            <person name="Kyrpides N.C."/>
        </authorList>
    </citation>
    <scope>NUCLEOTIDE SEQUENCE [LARGE SCALE GENOMIC DNA]</scope>
    <source>
        <strain>ATCC 14579 / DSM 31 / CCUG 7414 / JCM 2152 / NBRC 15305 / NCIMB 9373 / NCTC 2599 / NRRL B-3711</strain>
    </source>
</reference>
<protein>
    <recommendedName>
        <fullName evidence="1">Protein GrpE</fullName>
    </recommendedName>
    <alternativeName>
        <fullName evidence="1">HSP-70 cofactor</fullName>
    </alternativeName>
</protein>
<proteinExistence type="inferred from homology"/>